<proteinExistence type="evidence at transcript level"/>
<dbReference type="EC" id="3.4.24.-"/>
<dbReference type="EMBL" id="AE013599">
    <property type="protein sequence ID" value="AAF57348.2"/>
    <property type="molecule type" value="Genomic_DNA"/>
</dbReference>
<dbReference type="EMBL" id="AE013599">
    <property type="protein sequence ID" value="AAM68370.1"/>
    <property type="molecule type" value="Genomic_DNA"/>
</dbReference>
<dbReference type="EMBL" id="AE013599">
    <property type="protein sequence ID" value="ABI31021.1"/>
    <property type="molecule type" value="Genomic_DNA"/>
</dbReference>
<dbReference type="EMBL" id="AY102681">
    <property type="protein sequence ID" value="AAM27510.1"/>
    <property type="molecule type" value="mRNA"/>
</dbReference>
<dbReference type="RefSeq" id="NP_001036470.1">
    <property type="nucleotide sequence ID" value="NM_001043005.2"/>
</dbReference>
<dbReference type="RefSeq" id="NP_001286139.1">
    <property type="nucleotide sequence ID" value="NM_001299210.1"/>
</dbReference>
<dbReference type="RefSeq" id="NP_610156.1">
    <property type="nucleotide sequence ID" value="NM_136312.2"/>
</dbReference>
<dbReference type="RefSeq" id="NP_724396.1">
    <property type="nucleotide sequence ID" value="NM_165416.2"/>
</dbReference>
<dbReference type="SMR" id="Q9V9E3"/>
<dbReference type="BioGRID" id="61395">
    <property type="interactions" value="10"/>
</dbReference>
<dbReference type="FunCoup" id="Q9V9E3">
    <property type="interactions" value="1810"/>
</dbReference>
<dbReference type="IntAct" id="Q9V9E3">
    <property type="interactions" value="21"/>
</dbReference>
<dbReference type="STRING" id="7227.FBpp0311260"/>
<dbReference type="PaxDb" id="7227-FBpp0085413"/>
<dbReference type="EnsemblMetazoa" id="FBtr0086077">
    <property type="protein sequence ID" value="FBpp0085413"/>
    <property type="gene ID" value="FBgn0033005"/>
</dbReference>
<dbReference type="EnsemblMetazoa" id="FBtr0086078">
    <property type="protein sequence ID" value="FBpp0085414"/>
    <property type="gene ID" value="FBgn0033005"/>
</dbReference>
<dbReference type="EnsemblMetazoa" id="FBtr0111280">
    <property type="protein sequence ID" value="FBpp0110537"/>
    <property type="gene ID" value="FBgn0033005"/>
</dbReference>
<dbReference type="EnsemblMetazoa" id="FBtr0345009">
    <property type="protein sequence ID" value="FBpp0311260"/>
    <property type="gene ID" value="FBgn0033005"/>
</dbReference>
<dbReference type="GeneID" id="35475"/>
<dbReference type="KEGG" id="dme:Dmel_CG3107"/>
<dbReference type="UCSC" id="CG3107-RA">
    <property type="organism name" value="d. melanogaster"/>
</dbReference>
<dbReference type="AGR" id="FB:FBgn0033005"/>
<dbReference type="FlyBase" id="FBgn0033005">
    <property type="gene designation" value="CG3107"/>
</dbReference>
<dbReference type="VEuPathDB" id="VectorBase:FBgn0033005"/>
<dbReference type="eggNOG" id="KOG2019">
    <property type="taxonomic scope" value="Eukaryota"/>
</dbReference>
<dbReference type="GeneTree" id="ENSGT00390000018381"/>
<dbReference type="HOGENOM" id="CLU_009165_1_0_1"/>
<dbReference type="InParanoid" id="Q9V9E3"/>
<dbReference type="OMA" id="NYLYYIR"/>
<dbReference type="OrthoDB" id="10250783at2759"/>
<dbReference type="PhylomeDB" id="Q9V9E3"/>
<dbReference type="Reactome" id="R-DME-1268020">
    <property type="pathway name" value="Mitochondrial protein import"/>
</dbReference>
<dbReference type="BioGRID-ORCS" id="35475">
    <property type="hits" value="0 hits in 1 CRISPR screen"/>
</dbReference>
<dbReference type="GenomeRNAi" id="35475"/>
<dbReference type="PRO" id="PR:Q9V9E3"/>
<dbReference type="Proteomes" id="UP000000803">
    <property type="component" value="Chromosome 2R"/>
</dbReference>
<dbReference type="Bgee" id="FBgn0033005">
    <property type="expression patterns" value="Expressed in cleaving embryo and 224 other cell types or tissues"/>
</dbReference>
<dbReference type="ExpressionAtlas" id="Q9V9E3">
    <property type="expression patterns" value="baseline and differential"/>
</dbReference>
<dbReference type="GO" id="GO:0005759">
    <property type="term" value="C:mitochondrial matrix"/>
    <property type="evidence" value="ECO:0000250"/>
    <property type="project" value="UniProtKB"/>
</dbReference>
<dbReference type="GO" id="GO:0046872">
    <property type="term" value="F:metal ion binding"/>
    <property type="evidence" value="ECO:0007669"/>
    <property type="project" value="UniProtKB-KW"/>
</dbReference>
<dbReference type="GO" id="GO:0004222">
    <property type="term" value="F:metalloendopeptidase activity"/>
    <property type="evidence" value="ECO:0000250"/>
    <property type="project" value="UniProtKB"/>
</dbReference>
<dbReference type="GO" id="GO:0016485">
    <property type="term" value="P:protein processing"/>
    <property type="evidence" value="ECO:0000318"/>
    <property type="project" value="GO_Central"/>
</dbReference>
<dbReference type="GO" id="GO:0006508">
    <property type="term" value="P:proteolysis"/>
    <property type="evidence" value="ECO:0000250"/>
    <property type="project" value="UniProtKB"/>
</dbReference>
<dbReference type="FunFam" id="3.30.830.10:FF:000013">
    <property type="entry name" value="Mitochondrial presequence protease"/>
    <property type="match status" value="1"/>
</dbReference>
<dbReference type="FunFam" id="3.30.830.10:FF:000009">
    <property type="entry name" value="Presequence protease, mitochondrial"/>
    <property type="match status" value="1"/>
</dbReference>
<dbReference type="FunFam" id="3.30.830.10:FF:000011">
    <property type="entry name" value="Presequence protease, mitochondrial"/>
    <property type="match status" value="1"/>
</dbReference>
<dbReference type="Gene3D" id="3.30.830.10">
    <property type="entry name" value="Metalloenzyme, LuxS/M16 peptidase-like"/>
    <property type="match status" value="4"/>
</dbReference>
<dbReference type="InterPro" id="IPR011249">
    <property type="entry name" value="Metalloenz_LuxS/M16"/>
</dbReference>
<dbReference type="InterPro" id="IPR007863">
    <property type="entry name" value="Peptidase_M16_C"/>
</dbReference>
<dbReference type="InterPro" id="IPR013578">
    <property type="entry name" value="Peptidase_M16C_assoc"/>
</dbReference>
<dbReference type="InterPro" id="IPR055130">
    <property type="entry name" value="PreP_C"/>
</dbReference>
<dbReference type="PANTHER" id="PTHR43016">
    <property type="entry name" value="PRESEQUENCE PROTEASE"/>
    <property type="match status" value="1"/>
</dbReference>
<dbReference type="PANTHER" id="PTHR43016:SF13">
    <property type="entry name" value="PRESEQUENCE PROTEASE, MITOCHONDRIAL"/>
    <property type="match status" value="1"/>
</dbReference>
<dbReference type="Pfam" id="PF08367">
    <property type="entry name" value="M16C_assoc"/>
    <property type="match status" value="1"/>
</dbReference>
<dbReference type="Pfam" id="PF05193">
    <property type="entry name" value="Peptidase_M16_C"/>
    <property type="match status" value="1"/>
</dbReference>
<dbReference type="Pfam" id="PF22516">
    <property type="entry name" value="PreP_C"/>
    <property type="match status" value="1"/>
</dbReference>
<dbReference type="SMART" id="SM01264">
    <property type="entry name" value="M16C_associated"/>
    <property type="match status" value="1"/>
</dbReference>
<dbReference type="SUPFAM" id="SSF63411">
    <property type="entry name" value="LuxS/MPP-like metallohydrolase"/>
    <property type="match status" value="4"/>
</dbReference>
<protein>
    <recommendedName>
        <fullName>Presequence protease, mitochondrial</fullName>
        <ecNumber>3.4.24.-</ecNumber>
    </recommendedName>
</protein>
<evidence type="ECO:0000250" key="1"/>
<evidence type="ECO:0000255" key="2"/>
<evidence type="ECO:0000305" key="3"/>
<accession>Q9V9E3</accession>
<accession>A4UZ44</accession>
<accession>B7YZR1</accession>
<accession>Q0E9P8</accession>
<organism>
    <name type="scientific">Drosophila melanogaster</name>
    <name type="common">Fruit fly</name>
    <dbReference type="NCBI Taxonomy" id="7227"/>
    <lineage>
        <taxon>Eukaryota</taxon>
        <taxon>Metazoa</taxon>
        <taxon>Ecdysozoa</taxon>
        <taxon>Arthropoda</taxon>
        <taxon>Hexapoda</taxon>
        <taxon>Insecta</taxon>
        <taxon>Pterygota</taxon>
        <taxon>Neoptera</taxon>
        <taxon>Endopterygota</taxon>
        <taxon>Diptera</taxon>
        <taxon>Brachycera</taxon>
        <taxon>Muscomorpha</taxon>
        <taxon>Ephydroidea</taxon>
        <taxon>Drosophilidae</taxon>
        <taxon>Drosophila</taxon>
        <taxon>Sophophora</taxon>
    </lineage>
</organism>
<feature type="transit peptide" description="Mitochondrion" evidence="2">
    <location>
        <begin position="1"/>
        <end position="29"/>
    </location>
</feature>
<feature type="chain" id="PRO_0000249937" description="Presequence protease, mitochondrial">
    <location>
        <begin position="30"/>
        <end position="1034"/>
    </location>
</feature>
<feature type="active site" description="Proton acceptor" evidence="1">
    <location>
        <position position="131"/>
    </location>
</feature>
<feature type="binding site" evidence="1">
    <location>
        <position position="128"/>
    </location>
    <ligand>
        <name>Zn(2+)</name>
        <dbReference type="ChEBI" id="CHEBI:29105"/>
        <note>catalytic</note>
    </ligand>
</feature>
<feature type="binding site" evidence="1">
    <location>
        <position position="132"/>
    </location>
    <ligand>
        <name>Zn(2+)</name>
        <dbReference type="ChEBI" id="CHEBI:29105"/>
        <note>catalytic</note>
    </ligand>
</feature>
<feature type="binding site" evidence="1">
    <location>
        <position position="229"/>
    </location>
    <ligand>
        <name>Zn(2+)</name>
        <dbReference type="ChEBI" id="CHEBI:29105"/>
        <note>catalytic</note>
    </ligand>
</feature>
<comment type="function">
    <text evidence="1">ATP-independent protease that degrades mitochondrial transit peptides after their cleavage. Also degrades other unstructured peptides (By similarity).</text>
</comment>
<comment type="cofactor">
    <cofactor evidence="1">
        <name>Zn(2+)</name>
        <dbReference type="ChEBI" id="CHEBI:29105"/>
    </cofactor>
    <text evidence="1">Binds 1 zinc ion per subunit.</text>
</comment>
<comment type="subunit">
    <text evidence="1">Homodimer.</text>
</comment>
<comment type="subcellular location">
    <subcellularLocation>
        <location evidence="1">Mitochondrion</location>
    </subcellularLocation>
</comment>
<comment type="similarity">
    <text evidence="3">Belongs to the peptidase M16 family. PreP subfamily.</text>
</comment>
<name>PREP_DROME</name>
<reference key="1">
    <citation type="journal article" date="2000" name="Science">
        <title>The genome sequence of Drosophila melanogaster.</title>
        <authorList>
            <person name="Adams M.D."/>
            <person name="Celniker S.E."/>
            <person name="Holt R.A."/>
            <person name="Evans C.A."/>
            <person name="Gocayne J.D."/>
            <person name="Amanatides P.G."/>
            <person name="Scherer S.E."/>
            <person name="Li P.W."/>
            <person name="Hoskins R.A."/>
            <person name="Galle R.F."/>
            <person name="George R.A."/>
            <person name="Lewis S.E."/>
            <person name="Richards S."/>
            <person name="Ashburner M."/>
            <person name="Henderson S.N."/>
            <person name="Sutton G.G."/>
            <person name="Wortman J.R."/>
            <person name="Yandell M.D."/>
            <person name="Zhang Q."/>
            <person name="Chen L.X."/>
            <person name="Brandon R.C."/>
            <person name="Rogers Y.-H.C."/>
            <person name="Blazej R.G."/>
            <person name="Champe M."/>
            <person name="Pfeiffer B.D."/>
            <person name="Wan K.H."/>
            <person name="Doyle C."/>
            <person name="Baxter E.G."/>
            <person name="Helt G."/>
            <person name="Nelson C.R."/>
            <person name="Miklos G.L.G."/>
            <person name="Abril J.F."/>
            <person name="Agbayani A."/>
            <person name="An H.-J."/>
            <person name="Andrews-Pfannkoch C."/>
            <person name="Baldwin D."/>
            <person name="Ballew R.M."/>
            <person name="Basu A."/>
            <person name="Baxendale J."/>
            <person name="Bayraktaroglu L."/>
            <person name="Beasley E.M."/>
            <person name="Beeson K.Y."/>
            <person name="Benos P.V."/>
            <person name="Berman B.P."/>
            <person name="Bhandari D."/>
            <person name="Bolshakov S."/>
            <person name="Borkova D."/>
            <person name="Botchan M.R."/>
            <person name="Bouck J."/>
            <person name="Brokstein P."/>
            <person name="Brottier P."/>
            <person name="Burtis K.C."/>
            <person name="Busam D.A."/>
            <person name="Butler H."/>
            <person name="Cadieu E."/>
            <person name="Center A."/>
            <person name="Chandra I."/>
            <person name="Cherry J.M."/>
            <person name="Cawley S."/>
            <person name="Dahlke C."/>
            <person name="Davenport L.B."/>
            <person name="Davies P."/>
            <person name="de Pablos B."/>
            <person name="Delcher A."/>
            <person name="Deng Z."/>
            <person name="Mays A.D."/>
            <person name="Dew I."/>
            <person name="Dietz S.M."/>
            <person name="Dodson K."/>
            <person name="Doup L.E."/>
            <person name="Downes M."/>
            <person name="Dugan-Rocha S."/>
            <person name="Dunkov B.C."/>
            <person name="Dunn P."/>
            <person name="Durbin K.J."/>
            <person name="Evangelista C.C."/>
            <person name="Ferraz C."/>
            <person name="Ferriera S."/>
            <person name="Fleischmann W."/>
            <person name="Fosler C."/>
            <person name="Gabrielian A.E."/>
            <person name="Garg N.S."/>
            <person name="Gelbart W.M."/>
            <person name="Glasser K."/>
            <person name="Glodek A."/>
            <person name="Gong F."/>
            <person name="Gorrell J.H."/>
            <person name="Gu Z."/>
            <person name="Guan P."/>
            <person name="Harris M."/>
            <person name="Harris N.L."/>
            <person name="Harvey D.A."/>
            <person name="Heiman T.J."/>
            <person name="Hernandez J.R."/>
            <person name="Houck J."/>
            <person name="Hostin D."/>
            <person name="Houston K.A."/>
            <person name="Howland T.J."/>
            <person name="Wei M.-H."/>
            <person name="Ibegwam C."/>
            <person name="Jalali M."/>
            <person name="Kalush F."/>
            <person name="Karpen G.H."/>
            <person name="Ke Z."/>
            <person name="Kennison J.A."/>
            <person name="Ketchum K.A."/>
            <person name="Kimmel B.E."/>
            <person name="Kodira C.D."/>
            <person name="Kraft C.L."/>
            <person name="Kravitz S."/>
            <person name="Kulp D."/>
            <person name="Lai Z."/>
            <person name="Lasko P."/>
            <person name="Lei Y."/>
            <person name="Levitsky A.A."/>
            <person name="Li J.H."/>
            <person name="Li Z."/>
            <person name="Liang Y."/>
            <person name="Lin X."/>
            <person name="Liu X."/>
            <person name="Mattei B."/>
            <person name="McIntosh T.C."/>
            <person name="McLeod M.P."/>
            <person name="McPherson D."/>
            <person name="Merkulov G."/>
            <person name="Milshina N.V."/>
            <person name="Mobarry C."/>
            <person name="Morris J."/>
            <person name="Moshrefi A."/>
            <person name="Mount S.M."/>
            <person name="Moy M."/>
            <person name="Murphy B."/>
            <person name="Murphy L."/>
            <person name="Muzny D.M."/>
            <person name="Nelson D.L."/>
            <person name="Nelson D.R."/>
            <person name="Nelson K.A."/>
            <person name="Nixon K."/>
            <person name="Nusskern D.R."/>
            <person name="Pacleb J.M."/>
            <person name="Palazzolo M."/>
            <person name="Pittman G.S."/>
            <person name="Pan S."/>
            <person name="Pollard J."/>
            <person name="Puri V."/>
            <person name="Reese M.G."/>
            <person name="Reinert K."/>
            <person name="Remington K."/>
            <person name="Saunders R.D.C."/>
            <person name="Scheeler F."/>
            <person name="Shen H."/>
            <person name="Shue B.C."/>
            <person name="Siden-Kiamos I."/>
            <person name="Simpson M."/>
            <person name="Skupski M.P."/>
            <person name="Smith T.J."/>
            <person name="Spier E."/>
            <person name="Spradling A.C."/>
            <person name="Stapleton M."/>
            <person name="Strong R."/>
            <person name="Sun E."/>
            <person name="Svirskas R."/>
            <person name="Tector C."/>
            <person name="Turner R."/>
            <person name="Venter E."/>
            <person name="Wang A.H."/>
            <person name="Wang X."/>
            <person name="Wang Z.-Y."/>
            <person name="Wassarman D.A."/>
            <person name="Weinstock G.M."/>
            <person name="Weissenbach J."/>
            <person name="Williams S.M."/>
            <person name="Woodage T."/>
            <person name="Worley K.C."/>
            <person name="Wu D."/>
            <person name="Yang S."/>
            <person name="Yao Q.A."/>
            <person name="Ye J."/>
            <person name="Yeh R.-F."/>
            <person name="Zaveri J.S."/>
            <person name="Zhan M."/>
            <person name="Zhang G."/>
            <person name="Zhao Q."/>
            <person name="Zheng L."/>
            <person name="Zheng X.H."/>
            <person name="Zhong F.N."/>
            <person name="Zhong W."/>
            <person name="Zhou X."/>
            <person name="Zhu S.C."/>
            <person name="Zhu X."/>
            <person name="Smith H.O."/>
            <person name="Gibbs R.A."/>
            <person name="Myers E.W."/>
            <person name="Rubin G.M."/>
            <person name="Venter J.C."/>
        </authorList>
    </citation>
    <scope>NUCLEOTIDE SEQUENCE [LARGE SCALE GENOMIC DNA]</scope>
    <source>
        <strain>Berkeley</strain>
    </source>
</reference>
<reference key="2">
    <citation type="journal article" date="2002" name="Genome Biol.">
        <title>Annotation of the Drosophila melanogaster euchromatic genome: a systematic review.</title>
        <authorList>
            <person name="Misra S."/>
            <person name="Crosby M.A."/>
            <person name="Mungall C.J."/>
            <person name="Matthews B.B."/>
            <person name="Campbell K.S."/>
            <person name="Hradecky P."/>
            <person name="Huang Y."/>
            <person name="Kaminker J.S."/>
            <person name="Millburn G.H."/>
            <person name="Prochnik S.E."/>
            <person name="Smith C.D."/>
            <person name="Tupy J.L."/>
            <person name="Whitfield E.J."/>
            <person name="Bayraktaroglu L."/>
            <person name="Berman B.P."/>
            <person name="Bettencourt B.R."/>
            <person name="Celniker S.E."/>
            <person name="de Grey A.D.N.J."/>
            <person name="Drysdale R.A."/>
            <person name="Harris N.L."/>
            <person name="Richter J."/>
            <person name="Russo S."/>
            <person name="Schroeder A.J."/>
            <person name="Shu S.Q."/>
            <person name="Stapleton M."/>
            <person name="Yamada C."/>
            <person name="Ashburner M."/>
            <person name="Gelbart W.M."/>
            <person name="Rubin G.M."/>
            <person name="Lewis S.E."/>
        </authorList>
    </citation>
    <scope>GENOME REANNOTATION</scope>
    <source>
        <strain>Berkeley</strain>
    </source>
</reference>
<reference key="3">
    <citation type="journal article" date="2002" name="Genome Biol.">
        <title>A Drosophila full-length cDNA resource.</title>
        <authorList>
            <person name="Stapleton M."/>
            <person name="Carlson J.W."/>
            <person name="Brokstein P."/>
            <person name="Yu C."/>
            <person name="Champe M."/>
            <person name="George R.A."/>
            <person name="Guarin H."/>
            <person name="Kronmiller B."/>
            <person name="Pacleb J.M."/>
            <person name="Park S."/>
            <person name="Wan K.H."/>
            <person name="Rubin G.M."/>
            <person name="Celniker S.E."/>
        </authorList>
    </citation>
    <scope>NUCLEOTIDE SEQUENCE [LARGE SCALE MRNA]</scope>
    <source>
        <strain>Berkeley</strain>
        <tissue>Embryo</tissue>
    </source>
</reference>
<sequence>MLKGGMLSRWKMWSPQYKILRNHLINFKSVSTYKNISGVNTKQPKSPRQFGCMPHVTKKRKYKYEEGKTYHGFQCERVEHISEFELTSYTFRYERTGTELWHIDRNDSNNVFSINFRTTPFDSTGLPHILEHLSLCGSQKYPVRDPFFKMLNRSVATFMNAMTGPDYTIYPFSTMNEIDFRNLQHIYLDAVFRPNLAYFDFLQEGWRLENKDIFDKQSKLVIKGVVYNEMKGAFSENAQVFSQNLLNNIFPDHTYRHVSGGNPLEIPKLAYNDLVEFHKKYYHPSNARIYSYGLFDASKTLALLDEEYLSDQSWVDNSYSLIRQQERWTQPRLVHISSRLDNMGTTIDRQNQIAIALLMCDATNIQESFELHVLSEVLIRGPNSPFYKNLIEPNFSGGYNQTTGYSSDTKDTTFVVGLQDLRVEDFKKCIEIFDKTIINSMNDGFDSQHVESVLHNLELSLKHQNPNFGNTLLFNSTALWNHDGDVVSNLRVSDMISGLRESISQNKKYFQEKIEKYFANNNHRLTLTMSPDEAYEDKFKQAELELVEQKVKLLDEVKIEKIYERGLILDSYQKAESNTDLLPCLTMNDVRDPPKWPKLFIQNVQNVRTQICKVPTNEITYFKCMFNITGLSHEETQLMPLFCNVISAMGTTNYNYREFDKHILLKTGGFDFKLHLIEDVRDSKSYSLSVMINTHALNNNVPEMFALCQELIKNVRFDDSERLKMLIENYISYISVGVASSGHLYAMLGATSQVCDAGKLKSLLYGVDHIDFMKNFVHSTSTVDICDKLSTIASKVFNKDNMRGAINTTQSYEPSAISNYEKFLESLPTFGKTQTSRNIHYLDPSCQQYVMNIPVNYCAKALFTVPYLHQDHPTLRVLAKLLSAKYLLPVIREKNGAYGAGAKISSDGIFSFYSYRDPNSTKTLNAFDETYKWLRANQNVIDQQSLFESKLGVLQQLDTPIAPGNIGIDYFLYEVSQEDFESYRSRMLSVTIDDLQCAIENYFGKESMHYGKCILGPVNANLELETSHKWIINN</sequence>
<keyword id="KW-0378">Hydrolase</keyword>
<keyword id="KW-0479">Metal-binding</keyword>
<keyword id="KW-0482">Metalloprotease</keyword>
<keyword id="KW-0496">Mitochondrion</keyword>
<keyword id="KW-0645">Protease</keyword>
<keyword id="KW-1185">Reference proteome</keyword>
<keyword id="KW-0809">Transit peptide</keyword>
<keyword id="KW-0862">Zinc</keyword>
<gene>
    <name type="ORF">CG3107</name>
</gene>